<gene>
    <name evidence="1" type="primary">recR</name>
    <name type="ordered locus">SAV0480</name>
</gene>
<proteinExistence type="inferred from homology"/>
<keyword id="KW-0227">DNA damage</keyword>
<keyword id="KW-0233">DNA recombination</keyword>
<keyword id="KW-0234">DNA repair</keyword>
<keyword id="KW-0479">Metal-binding</keyword>
<keyword id="KW-0862">Zinc</keyword>
<keyword id="KW-0863">Zinc-finger</keyword>
<dbReference type="EMBL" id="BA000017">
    <property type="protein sequence ID" value="BAB56642.1"/>
    <property type="molecule type" value="Genomic_DNA"/>
</dbReference>
<dbReference type="RefSeq" id="WP_000559160.1">
    <property type="nucleotide sequence ID" value="NC_002758.2"/>
</dbReference>
<dbReference type="SMR" id="Q932G3"/>
<dbReference type="KEGG" id="sav:SAV0480"/>
<dbReference type="HOGENOM" id="CLU_060739_1_0_9"/>
<dbReference type="PhylomeDB" id="Q932G3"/>
<dbReference type="Proteomes" id="UP000002481">
    <property type="component" value="Chromosome"/>
</dbReference>
<dbReference type="GO" id="GO:0003677">
    <property type="term" value="F:DNA binding"/>
    <property type="evidence" value="ECO:0007669"/>
    <property type="project" value="UniProtKB-UniRule"/>
</dbReference>
<dbReference type="GO" id="GO:0008270">
    <property type="term" value="F:zinc ion binding"/>
    <property type="evidence" value="ECO:0007669"/>
    <property type="project" value="UniProtKB-KW"/>
</dbReference>
<dbReference type="GO" id="GO:0006310">
    <property type="term" value="P:DNA recombination"/>
    <property type="evidence" value="ECO:0007669"/>
    <property type="project" value="UniProtKB-UniRule"/>
</dbReference>
<dbReference type="GO" id="GO:0006281">
    <property type="term" value="P:DNA repair"/>
    <property type="evidence" value="ECO:0007669"/>
    <property type="project" value="UniProtKB-UniRule"/>
</dbReference>
<dbReference type="CDD" id="cd01025">
    <property type="entry name" value="TOPRIM_recR"/>
    <property type="match status" value="1"/>
</dbReference>
<dbReference type="Gene3D" id="3.30.60.80">
    <property type="match status" value="1"/>
</dbReference>
<dbReference type="Gene3D" id="3.40.1360.10">
    <property type="match status" value="1"/>
</dbReference>
<dbReference type="Gene3D" id="6.10.250.240">
    <property type="match status" value="1"/>
</dbReference>
<dbReference type="Gene3D" id="1.10.8.420">
    <property type="entry name" value="RecR Domain 1"/>
    <property type="match status" value="1"/>
</dbReference>
<dbReference type="HAMAP" id="MF_00017">
    <property type="entry name" value="RecR"/>
    <property type="match status" value="1"/>
</dbReference>
<dbReference type="InterPro" id="IPR000093">
    <property type="entry name" value="DNA_Rcmb_RecR"/>
</dbReference>
<dbReference type="InterPro" id="IPR003583">
    <property type="entry name" value="Hlx-hairpin-Hlx_DNA-bd_motif"/>
</dbReference>
<dbReference type="InterPro" id="IPR023627">
    <property type="entry name" value="Rcmb_RecR"/>
</dbReference>
<dbReference type="InterPro" id="IPR015967">
    <property type="entry name" value="Rcmb_RecR_Znf"/>
</dbReference>
<dbReference type="InterPro" id="IPR006171">
    <property type="entry name" value="TOPRIM_dom"/>
</dbReference>
<dbReference type="InterPro" id="IPR034137">
    <property type="entry name" value="TOPRIM_RecR"/>
</dbReference>
<dbReference type="NCBIfam" id="TIGR00615">
    <property type="entry name" value="recR"/>
    <property type="match status" value="1"/>
</dbReference>
<dbReference type="PANTHER" id="PTHR30446">
    <property type="entry name" value="RECOMBINATION PROTEIN RECR"/>
    <property type="match status" value="1"/>
</dbReference>
<dbReference type="PANTHER" id="PTHR30446:SF0">
    <property type="entry name" value="RECOMBINATION PROTEIN RECR"/>
    <property type="match status" value="1"/>
</dbReference>
<dbReference type="Pfam" id="PF21175">
    <property type="entry name" value="RecR_C"/>
    <property type="match status" value="1"/>
</dbReference>
<dbReference type="Pfam" id="PF21176">
    <property type="entry name" value="RecR_HhH"/>
    <property type="match status" value="1"/>
</dbReference>
<dbReference type="Pfam" id="PF02132">
    <property type="entry name" value="RecR_ZnF"/>
    <property type="match status" value="1"/>
</dbReference>
<dbReference type="Pfam" id="PF13662">
    <property type="entry name" value="Toprim_4"/>
    <property type="match status" value="1"/>
</dbReference>
<dbReference type="SMART" id="SM00278">
    <property type="entry name" value="HhH1"/>
    <property type="match status" value="1"/>
</dbReference>
<dbReference type="SMART" id="SM00493">
    <property type="entry name" value="TOPRIM"/>
    <property type="match status" value="1"/>
</dbReference>
<dbReference type="SUPFAM" id="SSF111304">
    <property type="entry name" value="Recombination protein RecR"/>
    <property type="match status" value="1"/>
</dbReference>
<dbReference type="PROSITE" id="PS01300">
    <property type="entry name" value="RECR"/>
    <property type="match status" value="1"/>
</dbReference>
<dbReference type="PROSITE" id="PS50880">
    <property type="entry name" value="TOPRIM"/>
    <property type="match status" value="1"/>
</dbReference>
<accession>Q932G3</accession>
<sequence length="198" mass="22103">MHYPEPISKLIDSFMKLPGIGPKTAQRLAFHTLDMKEDDVVQFAKALVDVKRELTYCSVCGHITENDPCYICEDKQRDRSVICVVEDDKDVIAMEKMREYKGLYHVLHGSISPMDGIGPEDINIPSLIERLKSDEVSELILAMNPNLEGESTAMYISRLVKPIGIKVTRLAQGLSVGGDLEYADEVTLSKAITGRTEM</sequence>
<protein>
    <recommendedName>
        <fullName evidence="1">Recombination protein RecR</fullName>
    </recommendedName>
</protein>
<organism>
    <name type="scientific">Staphylococcus aureus (strain Mu50 / ATCC 700699)</name>
    <dbReference type="NCBI Taxonomy" id="158878"/>
    <lineage>
        <taxon>Bacteria</taxon>
        <taxon>Bacillati</taxon>
        <taxon>Bacillota</taxon>
        <taxon>Bacilli</taxon>
        <taxon>Bacillales</taxon>
        <taxon>Staphylococcaceae</taxon>
        <taxon>Staphylococcus</taxon>
    </lineage>
</organism>
<comment type="function">
    <text evidence="1">May play a role in DNA repair. It seems to be involved in an RecBC-independent recombinational process of DNA repair. It may act with RecF and RecO.</text>
</comment>
<comment type="similarity">
    <text evidence="1">Belongs to the RecR family.</text>
</comment>
<name>RECR_STAAM</name>
<evidence type="ECO:0000255" key="1">
    <source>
        <dbReference type="HAMAP-Rule" id="MF_00017"/>
    </source>
</evidence>
<feature type="chain" id="PRO_0000190386" description="Recombination protein RecR">
    <location>
        <begin position="1"/>
        <end position="198"/>
    </location>
</feature>
<feature type="domain" description="Toprim" evidence="1">
    <location>
        <begin position="80"/>
        <end position="175"/>
    </location>
</feature>
<feature type="zinc finger region" description="C4-type" evidence="1">
    <location>
        <begin position="57"/>
        <end position="72"/>
    </location>
</feature>
<reference key="1">
    <citation type="journal article" date="2001" name="Lancet">
        <title>Whole genome sequencing of meticillin-resistant Staphylococcus aureus.</title>
        <authorList>
            <person name="Kuroda M."/>
            <person name="Ohta T."/>
            <person name="Uchiyama I."/>
            <person name="Baba T."/>
            <person name="Yuzawa H."/>
            <person name="Kobayashi I."/>
            <person name="Cui L."/>
            <person name="Oguchi A."/>
            <person name="Aoki K."/>
            <person name="Nagai Y."/>
            <person name="Lian J.-Q."/>
            <person name="Ito T."/>
            <person name="Kanamori M."/>
            <person name="Matsumaru H."/>
            <person name="Maruyama A."/>
            <person name="Murakami H."/>
            <person name="Hosoyama A."/>
            <person name="Mizutani-Ui Y."/>
            <person name="Takahashi N.K."/>
            <person name="Sawano T."/>
            <person name="Inoue R."/>
            <person name="Kaito C."/>
            <person name="Sekimizu K."/>
            <person name="Hirakawa H."/>
            <person name="Kuhara S."/>
            <person name="Goto S."/>
            <person name="Yabuzaki J."/>
            <person name="Kanehisa M."/>
            <person name="Yamashita A."/>
            <person name="Oshima K."/>
            <person name="Furuya K."/>
            <person name="Yoshino C."/>
            <person name="Shiba T."/>
            <person name="Hattori M."/>
            <person name="Ogasawara N."/>
            <person name="Hayashi H."/>
            <person name="Hiramatsu K."/>
        </authorList>
    </citation>
    <scope>NUCLEOTIDE SEQUENCE [LARGE SCALE GENOMIC DNA]</scope>
    <source>
        <strain>Mu50 / ATCC 700699</strain>
    </source>
</reference>